<evidence type="ECO:0000250" key="1">
    <source>
        <dbReference type="UniProtKB" id="Q96XT4"/>
    </source>
</evidence>
<evidence type="ECO:0000250" key="2">
    <source>
        <dbReference type="UniProtKB" id="Q96Y68"/>
    </source>
</evidence>
<evidence type="ECO:0000269" key="3">
    <source>
    </source>
</evidence>
<evidence type="ECO:0000303" key="4">
    <source>
    </source>
</evidence>
<evidence type="ECO:0000305" key="5"/>
<evidence type="ECO:0000312" key="6">
    <source>
        <dbReference type="EMBL" id="AKA73018.1"/>
    </source>
</evidence>
<evidence type="ECO:0000312" key="7">
    <source>
        <dbReference type="EMBL" id="AKA75716.1"/>
    </source>
</evidence>
<evidence type="ECO:0000312" key="8">
    <source>
        <dbReference type="EMBL" id="AKA78408.1"/>
    </source>
</evidence>
<evidence type="ECO:0000312" key="9">
    <source>
        <dbReference type="EMBL" id="SAI86468.1"/>
    </source>
</evidence>
<evidence type="ECO:0000312" key="10">
    <source>
        <dbReference type="Proteomes" id="UP000033057"/>
    </source>
</evidence>
<evidence type="ECO:0000312" key="11">
    <source>
        <dbReference type="Proteomes" id="UP000033085"/>
    </source>
</evidence>
<evidence type="ECO:0000312" key="12">
    <source>
        <dbReference type="Proteomes" id="UP000033106"/>
    </source>
</evidence>
<sequence length="305" mass="33616">MAGLKVEWNDWCPGCGNFGILSAEQQAIQELGLDPKKVVLVSGIGCSGKIPHFIRLPASGVHTLHGRALTFAIGIKLANPSLEVIVNGGDGDQLGIGVGHFVSAGRRNVDLTVIVHNNGVYGLTKGQASPTLKLGVKTKSLPKPNINSDINPIALAISSGYTFVARGYAYDVKHLKEIIKKAIKHKGLAMIDVLQPCPTYNDIHTKEYYDKRVYKLDEDPSWDPIVKKPEEMDDKMSKAILKSMEWGDRTPIGIFYQNELVSTYEQRIAERSPSYLDNPPAHDVIEFEGKPTTDVEDILKERRVT</sequence>
<protein>
    <recommendedName>
        <fullName evidence="4">2-oxoacid:ferredoxin oxidoreductase subunit beta</fullName>
        <shortName evidence="5">OFOR</shortName>
        <ecNumber evidence="3">1.2.7.11</ecNumber>
    </recommendedName>
</protein>
<accession>A0A0E3KBH3</accession>
<accession>A0A157T6A7</accession>
<comment type="function">
    <text evidence="3">Catalyzes the coenzyme A-dependent oxidative decarboxylation of different 2-oxoacids such as 2-oxoglutarate, pyruvate and 2-oxobutyrate to form their CoA derivatives.</text>
</comment>
<comment type="catalytic activity">
    <reaction evidence="3">
        <text>a 2-oxocarboxylate + 2 oxidized [2Fe-2S]-[ferredoxin] + CoA = an acyl-CoA + 2 reduced [2Fe-2S]-[ferredoxin] + CO2 + H(+)</text>
        <dbReference type="Rhea" id="RHEA:42316"/>
        <dbReference type="Rhea" id="RHEA-COMP:10000"/>
        <dbReference type="Rhea" id="RHEA-COMP:10001"/>
        <dbReference type="ChEBI" id="CHEBI:15378"/>
        <dbReference type="ChEBI" id="CHEBI:16526"/>
        <dbReference type="ChEBI" id="CHEBI:33737"/>
        <dbReference type="ChEBI" id="CHEBI:33738"/>
        <dbReference type="ChEBI" id="CHEBI:35179"/>
        <dbReference type="ChEBI" id="CHEBI:57287"/>
        <dbReference type="ChEBI" id="CHEBI:58342"/>
        <dbReference type="EC" id="1.2.7.11"/>
    </reaction>
</comment>
<comment type="cofactor">
    <cofactor evidence="1">
        <name>[4Fe-4S] cluster</name>
        <dbReference type="ChEBI" id="CHEBI:49883"/>
    </cofactor>
    <text evidence="1">Binds 1 [4Fe-4S] cluster per subunit.</text>
</comment>
<comment type="cofactor">
    <cofactor evidence="1">
        <name>thiamine diphosphate</name>
        <dbReference type="ChEBI" id="CHEBI:58937"/>
    </cofactor>
    <text evidence="1">Binds 1 thiamine pyrophosphate per subunit.</text>
</comment>
<comment type="cofactor">
    <cofactor evidence="1">
        <name>Mg(2+)</name>
        <dbReference type="ChEBI" id="CHEBI:18420"/>
    </cofactor>
    <text evidence="1">Binds 1 Mg(2+) per subunit.</text>
</comment>
<comment type="biophysicochemical properties">
    <kinetics>
        <KM evidence="3">163 uM for 2-oxoglutarate</KM>
        <KM evidence="3">275 uM for pyruvate</KM>
        <KM evidence="3">516 uM for 2-oxobutyrate</KM>
        <text>kcat is 452 min(-1) for 2-oxoglutarate as substrate. kcat is 144 min(-1) for pyruvate as substrate. kcat is 93 min(-1) for 2-oxobutyrate as substrate.</text>
    </kinetics>
    <phDependence>
        <text evidence="3">Optimum pH is between 7-8.</text>
    </phDependence>
    <temperatureDependence>
        <text evidence="3">Optimum temperature is 70 degrees Celsius.</text>
    </temperatureDependence>
</comment>
<comment type="subunit">
    <text evidence="3">Heterodimer composed of an alpha and a beta subunit.</text>
</comment>
<comment type="mass spectrometry" mass="33600.0" method="MALDI" evidence="3"/>
<comment type="sequence caution" evidence="5">
    <conflict type="erroneous initiation">
        <sequence resource="EMBL-CDS" id="SAI86468"/>
    </conflict>
    <text>Extended N-terminus.</text>
</comment>
<dbReference type="EC" id="1.2.7.11" evidence="3"/>
<dbReference type="EMBL" id="CP011055">
    <property type="protein sequence ID" value="AKA73018.1"/>
    <property type="molecule type" value="Genomic_DNA"/>
</dbReference>
<dbReference type="EMBL" id="CP011056">
    <property type="protein sequence ID" value="AKA75716.1"/>
    <property type="molecule type" value="Genomic_DNA"/>
</dbReference>
<dbReference type="EMBL" id="CP011057">
    <property type="protein sequence ID" value="AKA78408.1"/>
    <property type="molecule type" value="Genomic_DNA"/>
</dbReference>
<dbReference type="EMBL" id="LT549890">
    <property type="protein sequence ID" value="SAI86468.1"/>
    <property type="status" value="ALT_INIT"/>
    <property type="molecule type" value="Genomic_DNA"/>
</dbReference>
<dbReference type="RefSeq" id="WP_048186280.1">
    <property type="nucleotide sequence ID" value="NZ_CP011055.2"/>
</dbReference>
<dbReference type="SMR" id="A0A0E3KBH3"/>
<dbReference type="GeneID" id="44128565"/>
<dbReference type="KEGG" id="ssoa:SULA_0624"/>
<dbReference type="KEGG" id="ssof:SULC_0624"/>
<dbReference type="KEGG" id="ssol:SULB_0626"/>
<dbReference type="PATRIC" id="fig|2287.9.peg.3055"/>
<dbReference type="Proteomes" id="UP000033057">
    <property type="component" value="Chromosome"/>
</dbReference>
<dbReference type="Proteomes" id="UP000033085">
    <property type="component" value="Chromosome"/>
</dbReference>
<dbReference type="Proteomes" id="UP000033106">
    <property type="component" value="Chromosome"/>
</dbReference>
<dbReference type="Proteomes" id="UP000076770">
    <property type="component" value="Chromosome i"/>
</dbReference>
<dbReference type="GO" id="GO:0018491">
    <property type="term" value="F:2-oxobutyrate synthase activity"/>
    <property type="evidence" value="ECO:0000314"/>
    <property type="project" value="UniProtKB"/>
</dbReference>
<dbReference type="GO" id="GO:0047553">
    <property type="term" value="F:2-oxoglutarate synthase activity"/>
    <property type="evidence" value="ECO:0000314"/>
    <property type="project" value="UniProtKB"/>
</dbReference>
<dbReference type="GO" id="GO:0051539">
    <property type="term" value="F:4 iron, 4 sulfur cluster binding"/>
    <property type="evidence" value="ECO:0000250"/>
    <property type="project" value="UniProtKB"/>
</dbReference>
<dbReference type="GO" id="GO:0000287">
    <property type="term" value="F:magnesium ion binding"/>
    <property type="evidence" value="ECO:0000250"/>
    <property type="project" value="UniProtKB"/>
</dbReference>
<dbReference type="GO" id="GO:0019164">
    <property type="term" value="F:pyruvate synthase activity"/>
    <property type="evidence" value="ECO:0000314"/>
    <property type="project" value="UniProtKB"/>
</dbReference>
<dbReference type="GO" id="GO:0030976">
    <property type="term" value="F:thiamine pyrophosphate binding"/>
    <property type="evidence" value="ECO:0000250"/>
    <property type="project" value="UniProtKB"/>
</dbReference>
<dbReference type="CDD" id="cd03375">
    <property type="entry name" value="TPP_OGFOR"/>
    <property type="match status" value="1"/>
</dbReference>
<dbReference type="FunFam" id="3.40.50.970:FF:000049">
    <property type="entry name" value="2-oxoglutarate ferredoxin oxidoreductase subunit beta"/>
    <property type="match status" value="1"/>
</dbReference>
<dbReference type="Gene3D" id="3.40.50.970">
    <property type="match status" value="1"/>
</dbReference>
<dbReference type="InterPro" id="IPR053399">
    <property type="entry name" value="2-oxoacid:Fd_oxidored_beta"/>
</dbReference>
<dbReference type="InterPro" id="IPR051457">
    <property type="entry name" value="2-oxoacid:Fd_oxidoreductase"/>
</dbReference>
<dbReference type="InterPro" id="IPR011896">
    <property type="entry name" value="OFOB"/>
</dbReference>
<dbReference type="InterPro" id="IPR032686">
    <property type="entry name" value="PFO_beta_C"/>
</dbReference>
<dbReference type="InterPro" id="IPR029061">
    <property type="entry name" value="THDP-binding"/>
</dbReference>
<dbReference type="InterPro" id="IPR011766">
    <property type="entry name" value="TPP_enzyme_TPP-bd"/>
</dbReference>
<dbReference type="NCBIfam" id="NF041171">
    <property type="entry name" value="Oxoac_fdxbeta_Archa"/>
    <property type="match status" value="1"/>
</dbReference>
<dbReference type="NCBIfam" id="TIGR02177">
    <property type="entry name" value="PorB_KorB"/>
    <property type="match status" value="1"/>
</dbReference>
<dbReference type="PANTHER" id="PTHR48084">
    <property type="entry name" value="2-OXOGLUTARATE OXIDOREDUCTASE SUBUNIT KORB-RELATED"/>
    <property type="match status" value="1"/>
</dbReference>
<dbReference type="PANTHER" id="PTHR48084:SF2">
    <property type="entry name" value="PYRUVATE FERREDOXIN_FLAVODOXIN OXIDOREDUCTASE, BETA SUBUNIT"/>
    <property type="match status" value="1"/>
</dbReference>
<dbReference type="Pfam" id="PF12367">
    <property type="entry name" value="PFO_beta_C"/>
    <property type="match status" value="1"/>
</dbReference>
<dbReference type="Pfam" id="PF02775">
    <property type="entry name" value="TPP_enzyme_C"/>
    <property type="match status" value="1"/>
</dbReference>
<dbReference type="SUPFAM" id="SSF52518">
    <property type="entry name" value="Thiamin diphosphate-binding fold (THDP-binding)"/>
    <property type="match status" value="1"/>
</dbReference>
<organism>
    <name type="scientific">Saccharolobus solfataricus</name>
    <name type="common">Sulfolobus solfataricus</name>
    <dbReference type="NCBI Taxonomy" id="2287"/>
    <lineage>
        <taxon>Archaea</taxon>
        <taxon>Thermoproteota</taxon>
        <taxon>Thermoprotei</taxon>
        <taxon>Sulfolobales</taxon>
        <taxon>Sulfolobaceae</taxon>
        <taxon>Saccharolobus</taxon>
    </lineage>
</organism>
<name>OFOB_SACSO</name>
<gene>
    <name evidence="9" type="ORF">SSOP1_2914</name>
    <name evidence="8" type="ORF">SULA_0624</name>
    <name evidence="6" type="ORF">SULB_0626</name>
    <name evidence="7" type="ORF">SULC_0624</name>
</gene>
<keyword id="KW-0408">Iron</keyword>
<keyword id="KW-0411">Iron-sulfur</keyword>
<keyword id="KW-0460">Magnesium</keyword>
<keyword id="KW-0479">Metal-binding</keyword>
<keyword id="KW-0560">Oxidoreductase</keyword>
<keyword id="KW-0786">Thiamine pyrophosphate</keyword>
<proteinExistence type="evidence at protein level"/>
<feature type="chain" id="PRO_0000445528" description="2-oxoacid:ferredoxin oxidoreductase subunit beta">
    <location>
        <begin position="1"/>
        <end position="305"/>
    </location>
</feature>
<feature type="binding site" evidence="1">
    <location>
        <position position="12"/>
    </location>
    <ligand>
        <name>[4Fe-4S] cluster</name>
        <dbReference type="ChEBI" id="CHEBI:49883"/>
    </ligand>
</feature>
<feature type="binding site" evidence="1">
    <location>
        <position position="15"/>
    </location>
    <ligand>
        <name>[4Fe-4S] cluster</name>
        <dbReference type="ChEBI" id="CHEBI:49883"/>
    </ligand>
</feature>
<feature type="binding site" evidence="1">
    <location>
        <begin position="44"/>
        <end position="47"/>
    </location>
    <ligand>
        <name>thiamine diphosphate</name>
        <dbReference type="ChEBI" id="CHEBI:58937"/>
    </ligand>
</feature>
<feature type="binding site" evidence="1">
    <location>
        <position position="46"/>
    </location>
    <ligand>
        <name>[4Fe-4S] cluster</name>
        <dbReference type="ChEBI" id="CHEBI:49883"/>
    </ligand>
</feature>
<feature type="binding site" evidence="1">
    <location>
        <position position="65"/>
    </location>
    <ligand>
        <name>thiamine diphosphate</name>
        <dbReference type="ChEBI" id="CHEBI:58937"/>
    </ligand>
</feature>
<feature type="binding site" evidence="1">
    <location>
        <position position="90"/>
    </location>
    <ligand>
        <name>Mg(2+)</name>
        <dbReference type="ChEBI" id="CHEBI:18420"/>
    </ligand>
</feature>
<feature type="binding site" evidence="1">
    <location>
        <begin position="91"/>
        <end position="92"/>
    </location>
    <ligand>
        <name>thiamine diphosphate</name>
        <dbReference type="ChEBI" id="CHEBI:58937"/>
    </ligand>
</feature>
<feature type="binding site" evidence="1">
    <location>
        <position position="118"/>
    </location>
    <ligand>
        <name>Mg(2+)</name>
        <dbReference type="ChEBI" id="CHEBI:18420"/>
    </ligand>
</feature>
<feature type="binding site" evidence="1">
    <location>
        <position position="120"/>
    </location>
    <ligand>
        <name>Mg(2+)</name>
        <dbReference type="ChEBI" id="CHEBI:18420"/>
    </ligand>
</feature>
<feature type="binding site" evidence="1">
    <location>
        <begin position="122"/>
        <end position="123"/>
    </location>
    <ligand>
        <name>thiamine diphosphate</name>
        <dbReference type="ChEBI" id="CHEBI:58937"/>
    </ligand>
</feature>
<feature type="binding site" evidence="1">
    <location>
        <position position="197"/>
    </location>
    <ligand>
        <name>[4Fe-4S] cluster</name>
        <dbReference type="ChEBI" id="CHEBI:49883"/>
    </ligand>
</feature>
<feature type="site" description="Plays an important role in the binding of CoA" evidence="2">
    <location>
        <position position="125"/>
    </location>
</feature>
<feature type="sequence conflict" description="In Ref. 2; SAI86468." evidence="5" ref="2">
    <original>T</original>
    <variation>I</variation>
    <location>
        <position position="250"/>
    </location>
</feature>
<reference key="1">
    <citation type="journal article" date="2015" name="Genome Announc.">
        <title>Complete Genome Sequence of Sulfolobus solfataricus Strain 98/2 and Evolved Derivatives.</title>
        <authorList>
            <person name="McCarthy S."/>
            <person name="Gradnigo J."/>
            <person name="Johnson T."/>
            <person name="Payne S."/>
            <person name="Lipzen A."/>
            <person name="Martin J."/>
            <person name="Schackwitz W."/>
            <person name="Moriyama E."/>
            <person name="Blum P."/>
        </authorList>
    </citation>
    <scope>NUCLEOTIDE SEQUENCE [LARGE SCALE GENOMIC DNA]</scope>
    <source>
        <strain evidence="7 10">98/2 SULC</strain>
        <strain evidence="8 12">SULA</strain>
        <strain evidence="6 11">SULB</strain>
    </source>
</reference>
<reference key="2">
    <citation type="submission" date="2016-04" db="EMBL/GenBank/DDBJ databases">
        <authorList>
            <person name="Shah S.A."/>
            <person name="Garrett R.A."/>
        </authorList>
    </citation>
    <scope>NUCLEOTIDE SEQUENCE [LARGE SCALE GENOMIC DNA]</scope>
    <source>
        <strain evidence="9">ATCC 35091 / DSM 1616 / JCM 8930 / NBRC 15331 / P1</strain>
    </source>
</reference>
<reference key="3">
    <citation type="journal article" date="2006" name="J. Biochem. Mol. Biol.">
        <title>Purifications and characterizations of a ferredoxin and its related 2-oxoacid:ferredoxin oxidoreductase from the hyperthermophilic archaeon, Sulfolobus solfataricus P1.</title>
        <authorList>
            <person name="Park Y.J."/>
            <person name="Yoo C.B."/>
            <person name="Choi S.Y."/>
            <person name="Lee H.B."/>
        </authorList>
    </citation>
    <scope>FUNCTION</scope>
    <scope>CATALYTIC ACTIVITY</scope>
    <scope>BIOPHYSICOCHEMICAL PROPERTIES</scope>
    <scope>MASS SPECTROMETRY</scope>
    <scope>SUBUNIT</scope>
    <scope>SUBSTRATE SPECIFICITY</scope>
    <source>
        <strain>ATCC 35091 / DSM 1616 / JCM 8930 / NBRC 15331 / P1</strain>
    </source>
</reference>